<accession>A7NEF9</accession>
<keyword id="KW-0413">Isomerase</keyword>
<keyword id="KW-0460">Magnesium</keyword>
<keyword id="KW-0479">Metal-binding</keyword>
<keyword id="KW-0597">Phosphoprotein</keyword>
<name>GLMM_FRATF</name>
<feature type="chain" id="PRO_1000068907" description="Phosphoglucosamine mutase">
    <location>
        <begin position="1"/>
        <end position="443"/>
    </location>
</feature>
<feature type="active site" description="Phosphoserine intermediate" evidence="1">
    <location>
        <position position="101"/>
    </location>
</feature>
<feature type="binding site" description="via phosphate group" evidence="1">
    <location>
        <position position="101"/>
    </location>
    <ligand>
        <name>Mg(2+)</name>
        <dbReference type="ChEBI" id="CHEBI:18420"/>
    </ligand>
</feature>
<feature type="binding site" evidence="1">
    <location>
        <position position="239"/>
    </location>
    <ligand>
        <name>Mg(2+)</name>
        <dbReference type="ChEBI" id="CHEBI:18420"/>
    </ligand>
</feature>
<feature type="binding site" evidence="1">
    <location>
        <position position="241"/>
    </location>
    <ligand>
        <name>Mg(2+)</name>
        <dbReference type="ChEBI" id="CHEBI:18420"/>
    </ligand>
</feature>
<feature type="binding site" evidence="1">
    <location>
        <position position="243"/>
    </location>
    <ligand>
        <name>Mg(2+)</name>
        <dbReference type="ChEBI" id="CHEBI:18420"/>
    </ligand>
</feature>
<feature type="modified residue" description="Phosphoserine" evidence="1">
    <location>
        <position position="101"/>
    </location>
</feature>
<evidence type="ECO:0000255" key="1">
    <source>
        <dbReference type="HAMAP-Rule" id="MF_01554"/>
    </source>
</evidence>
<protein>
    <recommendedName>
        <fullName evidence="1">Phosphoglucosamine mutase</fullName>
        <ecNumber evidence="1">5.4.2.10</ecNumber>
    </recommendedName>
</protein>
<proteinExistence type="inferred from homology"/>
<dbReference type="EC" id="5.4.2.10" evidence="1"/>
<dbReference type="EMBL" id="CP000803">
    <property type="protein sequence ID" value="ABU62362.1"/>
    <property type="molecule type" value="Genomic_DNA"/>
</dbReference>
<dbReference type="RefSeq" id="WP_003017310.1">
    <property type="nucleotide sequence ID" value="NC_009749.1"/>
</dbReference>
<dbReference type="SMR" id="A7NEF9"/>
<dbReference type="KEGG" id="fta:FTA_1887"/>
<dbReference type="HOGENOM" id="CLU_016950_7_0_6"/>
<dbReference type="GO" id="GO:0005829">
    <property type="term" value="C:cytosol"/>
    <property type="evidence" value="ECO:0007669"/>
    <property type="project" value="TreeGrafter"/>
</dbReference>
<dbReference type="GO" id="GO:0000287">
    <property type="term" value="F:magnesium ion binding"/>
    <property type="evidence" value="ECO:0007669"/>
    <property type="project" value="UniProtKB-UniRule"/>
</dbReference>
<dbReference type="GO" id="GO:0008966">
    <property type="term" value="F:phosphoglucosamine mutase activity"/>
    <property type="evidence" value="ECO:0007669"/>
    <property type="project" value="UniProtKB-UniRule"/>
</dbReference>
<dbReference type="GO" id="GO:0004615">
    <property type="term" value="F:phosphomannomutase activity"/>
    <property type="evidence" value="ECO:0007669"/>
    <property type="project" value="TreeGrafter"/>
</dbReference>
<dbReference type="GO" id="GO:0005975">
    <property type="term" value="P:carbohydrate metabolic process"/>
    <property type="evidence" value="ECO:0007669"/>
    <property type="project" value="InterPro"/>
</dbReference>
<dbReference type="GO" id="GO:0009252">
    <property type="term" value="P:peptidoglycan biosynthetic process"/>
    <property type="evidence" value="ECO:0007669"/>
    <property type="project" value="TreeGrafter"/>
</dbReference>
<dbReference type="GO" id="GO:0006048">
    <property type="term" value="P:UDP-N-acetylglucosamine biosynthetic process"/>
    <property type="evidence" value="ECO:0007669"/>
    <property type="project" value="TreeGrafter"/>
</dbReference>
<dbReference type="CDD" id="cd05802">
    <property type="entry name" value="GlmM"/>
    <property type="match status" value="1"/>
</dbReference>
<dbReference type="FunFam" id="3.30.310.50:FF:000001">
    <property type="entry name" value="Phosphoglucosamine mutase"/>
    <property type="match status" value="1"/>
</dbReference>
<dbReference type="FunFam" id="3.40.120.10:FF:000001">
    <property type="entry name" value="Phosphoglucosamine mutase"/>
    <property type="match status" value="1"/>
</dbReference>
<dbReference type="FunFam" id="3.40.120.10:FF:000003">
    <property type="entry name" value="Phosphoglucosamine mutase"/>
    <property type="match status" value="1"/>
</dbReference>
<dbReference type="Gene3D" id="3.40.120.10">
    <property type="entry name" value="Alpha-D-Glucose-1,6-Bisphosphate, subunit A, domain 3"/>
    <property type="match status" value="3"/>
</dbReference>
<dbReference type="Gene3D" id="3.30.310.50">
    <property type="entry name" value="Alpha-D-phosphohexomutase, C-terminal domain"/>
    <property type="match status" value="1"/>
</dbReference>
<dbReference type="HAMAP" id="MF_01554_B">
    <property type="entry name" value="GlmM_B"/>
    <property type="match status" value="1"/>
</dbReference>
<dbReference type="InterPro" id="IPR005844">
    <property type="entry name" value="A-D-PHexomutase_a/b/a-I"/>
</dbReference>
<dbReference type="InterPro" id="IPR016055">
    <property type="entry name" value="A-D-PHexomutase_a/b/a-I/II/III"/>
</dbReference>
<dbReference type="InterPro" id="IPR005845">
    <property type="entry name" value="A-D-PHexomutase_a/b/a-II"/>
</dbReference>
<dbReference type="InterPro" id="IPR005846">
    <property type="entry name" value="A-D-PHexomutase_a/b/a-III"/>
</dbReference>
<dbReference type="InterPro" id="IPR005843">
    <property type="entry name" value="A-D-PHexomutase_C"/>
</dbReference>
<dbReference type="InterPro" id="IPR036900">
    <property type="entry name" value="A-D-PHexomutase_C_sf"/>
</dbReference>
<dbReference type="InterPro" id="IPR005841">
    <property type="entry name" value="Alpha-D-phosphohexomutase_SF"/>
</dbReference>
<dbReference type="InterPro" id="IPR006352">
    <property type="entry name" value="GlmM_bact"/>
</dbReference>
<dbReference type="InterPro" id="IPR050060">
    <property type="entry name" value="Phosphoglucosamine_mutase"/>
</dbReference>
<dbReference type="NCBIfam" id="TIGR01455">
    <property type="entry name" value="glmM"/>
    <property type="match status" value="1"/>
</dbReference>
<dbReference type="NCBIfam" id="NF008139">
    <property type="entry name" value="PRK10887.1"/>
    <property type="match status" value="1"/>
</dbReference>
<dbReference type="PANTHER" id="PTHR42946:SF1">
    <property type="entry name" value="PHOSPHOGLUCOMUTASE (ALPHA-D-GLUCOSE-1,6-BISPHOSPHATE-DEPENDENT)"/>
    <property type="match status" value="1"/>
</dbReference>
<dbReference type="PANTHER" id="PTHR42946">
    <property type="entry name" value="PHOSPHOHEXOSE MUTASE"/>
    <property type="match status" value="1"/>
</dbReference>
<dbReference type="Pfam" id="PF02878">
    <property type="entry name" value="PGM_PMM_I"/>
    <property type="match status" value="1"/>
</dbReference>
<dbReference type="Pfam" id="PF02879">
    <property type="entry name" value="PGM_PMM_II"/>
    <property type="match status" value="1"/>
</dbReference>
<dbReference type="Pfam" id="PF02880">
    <property type="entry name" value="PGM_PMM_III"/>
    <property type="match status" value="1"/>
</dbReference>
<dbReference type="Pfam" id="PF00408">
    <property type="entry name" value="PGM_PMM_IV"/>
    <property type="match status" value="1"/>
</dbReference>
<dbReference type="PRINTS" id="PR00509">
    <property type="entry name" value="PGMPMM"/>
</dbReference>
<dbReference type="SUPFAM" id="SSF55957">
    <property type="entry name" value="Phosphoglucomutase, C-terminal domain"/>
    <property type="match status" value="1"/>
</dbReference>
<dbReference type="SUPFAM" id="SSF53738">
    <property type="entry name" value="Phosphoglucomutase, first 3 domains"/>
    <property type="match status" value="3"/>
</dbReference>
<organism>
    <name type="scientific">Francisella tularensis subsp. holarctica (strain FTNF002-00 / FTA)</name>
    <dbReference type="NCBI Taxonomy" id="458234"/>
    <lineage>
        <taxon>Bacteria</taxon>
        <taxon>Pseudomonadati</taxon>
        <taxon>Pseudomonadota</taxon>
        <taxon>Gammaproteobacteria</taxon>
        <taxon>Thiotrichales</taxon>
        <taxon>Francisellaceae</taxon>
        <taxon>Francisella</taxon>
    </lineage>
</organism>
<comment type="function">
    <text evidence="1">Catalyzes the conversion of glucosamine-6-phosphate to glucosamine-1-phosphate.</text>
</comment>
<comment type="catalytic activity">
    <reaction evidence="1">
        <text>alpha-D-glucosamine 1-phosphate = D-glucosamine 6-phosphate</text>
        <dbReference type="Rhea" id="RHEA:23424"/>
        <dbReference type="ChEBI" id="CHEBI:58516"/>
        <dbReference type="ChEBI" id="CHEBI:58725"/>
        <dbReference type="EC" id="5.4.2.10"/>
    </reaction>
</comment>
<comment type="cofactor">
    <cofactor evidence="1">
        <name>Mg(2+)</name>
        <dbReference type="ChEBI" id="CHEBI:18420"/>
    </cofactor>
    <text evidence="1">Binds 1 Mg(2+) ion per subunit.</text>
</comment>
<comment type="PTM">
    <text evidence="1">Activated by phosphorylation.</text>
</comment>
<comment type="similarity">
    <text evidence="1">Belongs to the phosphohexose mutase family.</text>
</comment>
<sequence length="443" mass="48207">MAKYFGTDGIRGEVANSTITVEFTQKLGNAVGSLINQKNYPKFVIVGQDTRSSGGFLKFALVSGLNAAGIDVLDLGVVPTPVVAFMTVKHRAAAGFVITASHNKFTDNGIKLFSSNGFKLDDALEEEVEDMIDGDFIYQPQFKFGSYKILANAIDEYIESIHSRFAKFVNYKGKVVVDCAHGAASHNFEALLDKFGINYVSIASNPDGLNINVGCGATCVSNIKKAVKEQKADLGISLDGDADRIIIVDENGQEIDGDGILNILAQYSDICGGTNGIVGTQMTNMSYENHYRANKIPFIRSKVGDRYVLEDLVKYGYKIGGESSGHVINLNFGTTGDGLFTAIQLLAIFSQAYKPVSEFKLQGELMQQTLINVPLTKKVAREDLQKVASDVNDVEKRLGNRGRVLLRPSGTEPVLRVMVEADDKSLATNEAEYLVEKVKQKLV</sequence>
<reference key="1">
    <citation type="journal article" date="2009" name="PLoS ONE">
        <title>Complete genome sequence of Francisella tularensis subspecies holarctica FTNF002-00.</title>
        <authorList>
            <person name="Barabote R.D."/>
            <person name="Xie G."/>
            <person name="Brettin T.S."/>
            <person name="Hinrichs S.H."/>
            <person name="Fey P.D."/>
            <person name="Jay J.J."/>
            <person name="Engle J.L."/>
            <person name="Godbole S.D."/>
            <person name="Noronha J.M."/>
            <person name="Scheuermann R.H."/>
            <person name="Zhou L.W."/>
            <person name="Lion C."/>
            <person name="Dempsey M.P."/>
        </authorList>
    </citation>
    <scope>NUCLEOTIDE SEQUENCE [LARGE SCALE GENOMIC DNA]</scope>
    <source>
        <strain>FTNF002-00 / FTA</strain>
    </source>
</reference>
<gene>
    <name evidence="1" type="primary">glmM</name>
    <name type="ordered locus">FTA_1887</name>
</gene>